<reference key="1">
    <citation type="journal article" date="2005" name="Genome Res.">
        <title>Comparative genome sequencing of Drosophila pseudoobscura: chromosomal, gene, and cis-element evolution.</title>
        <authorList>
            <person name="Richards S."/>
            <person name="Liu Y."/>
            <person name="Bettencourt B.R."/>
            <person name="Hradecky P."/>
            <person name="Letovsky S."/>
            <person name="Nielsen R."/>
            <person name="Thornton K."/>
            <person name="Hubisz M.J."/>
            <person name="Chen R."/>
            <person name="Meisel R.P."/>
            <person name="Couronne O."/>
            <person name="Hua S."/>
            <person name="Smith M.A."/>
            <person name="Zhang P."/>
            <person name="Liu J."/>
            <person name="Bussemaker H.J."/>
            <person name="van Batenburg M.F."/>
            <person name="Howells S.L."/>
            <person name="Scherer S.E."/>
            <person name="Sodergren E."/>
            <person name="Matthews B.B."/>
            <person name="Crosby M.A."/>
            <person name="Schroeder A.J."/>
            <person name="Ortiz-Barrientos D."/>
            <person name="Rives C.M."/>
            <person name="Metzker M.L."/>
            <person name="Muzny D.M."/>
            <person name="Scott G."/>
            <person name="Steffen D."/>
            <person name="Wheeler D.A."/>
            <person name="Worley K.C."/>
            <person name="Havlak P."/>
            <person name="Durbin K.J."/>
            <person name="Egan A."/>
            <person name="Gill R."/>
            <person name="Hume J."/>
            <person name="Morgan M.B."/>
            <person name="Miner G."/>
            <person name="Hamilton C."/>
            <person name="Huang Y."/>
            <person name="Waldron L."/>
            <person name="Verduzco D."/>
            <person name="Clerc-Blankenburg K.P."/>
            <person name="Dubchak I."/>
            <person name="Noor M.A.F."/>
            <person name="Anderson W."/>
            <person name="White K.P."/>
            <person name="Clark A.G."/>
            <person name="Schaeffer S.W."/>
            <person name="Gelbart W.M."/>
            <person name="Weinstock G.M."/>
            <person name="Gibbs R.A."/>
        </authorList>
    </citation>
    <scope>NUCLEOTIDE SEQUENCE [LARGE SCALE GENOMIC DNA]</scope>
    <source>
        <strain>MV2-25 / Tucson 14011-0121.94</strain>
    </source>
</reference>
<feature type="chain" id="PRO_0000305070" description="WSCD family member GA21586">
    <location>
        <begin position="1"/>
        <end position="316"/>
    </location>
</feature>
<feature type="transmembrane region" description="Helical" evidence="1">
    <location>
        <begin position="8"/>
        <end position="28"/>
    </location>
</feature>
<feature type="glycosylation site" description="N-linked (GlcNAc...) asparagine" evidence="1">
    <location>
        <position position="78"/>
    </location>
</feature>
<feature type="glycosylation site" description="N-linked (GlcNAc...) asparagine" evidence="1">
    <location>
        <position position="150"/>
    </location>
</feature>
<feature type="glycosylation site" description="N-linked (GlcNAc...) asparagine" evidence="1">
    <location>
        <position position="226"/>
    </location>
</feature>
<feature type="glycosylation site" description="N-linked (GlcNAc...) asparagine" evidence="1">
    <location>
        <position position="232"/>
    </location>
</feature>
<protein>
    <recommendedName>
        <fullName>WSCD family member GA21586</fullName>
    </recommendedName>
</protein>
<accession>Q29G54</accession>
<organism>
    <name type="scientific">Drosophila pseudoobscura pseudoobscura</name>
    <name type="common">Fruit fly</name>
    <dbReference type="NCBI Taxonomy" id="46245"/>
    <lineage>
        <taxon>Eukaryota</taxon>
        <taxon>Metazoa</taxon>
        <taxon>Ecdysozoa</taxon>
        <taxon>Arthropoda</taxon>
        <taxon>Hexapoda</taxon>
        <taxon>Insecta</taxon>
        <taxon>Pterygota</taxon>
        <taxon>Neoptera</taxon>
        <taxon>Endopterygota</taxon>
        <taxon>Diptera</taxon>
        <taxon>Brachycera</taxon>
        <taxon>Muscomorpha</taxon>
        <taxon>Ephydroidea</taxon>
        <taxon>Drosophilidae</taxon>
        <taxon>Drosophila</taxon>
        <taxon>Sophophora</taxon>
    </lineage>
</organism>
<evidence type="ECO:0000255" key="1"/>
<evidence type="ECO:0000305" key="2"/>
<name>WSCD_DROPS</name>
<sequence>MALQGWRFFGVSATIIIYIGGVLFLSMNNIPGSHPKRPRIERFAEFPSFHSPRFPMPSRKMTIRWCRDLKYMNRDLPNYTDYRADFYTLPSDVSASLQASPMLTALASFPGSGNTWLRYLLQQATGILTGSIYKDYGLLKTGFPAENVCNSSVLLVKTHEWGGKSWAPFAKAILLVRDPEKAIIAEFNRQSGGHIGFASPDRYKRTKGKYWQQFVSNKLKGWELMNLSWARNFTGSIKVVFYDDLVHHTERELRAILEFLQFPVDETLLRCAILRKEGIFRRKKRLLSFDPYTEAMRAQVQARKRIVYSLLGRKEH</sequence>
<keyword id="KW-0325">Glycoprotein</keyword>
<keyword id="KW-0472">Membrane</keyword>
<keyword id="KW-1185">Reference proteome</keyword>
<keyword id="KW-0812">Transmembrane</keyword>
<keyword id="KW-1133">Transmembrane helix</keyword>
<dbReference type="EMBL" id="CH379064">
    <property type="protein sequence ID" value="EAL32256.2"/>
    <property type="molecule type" value="Genomic_DNA"/>
</dbReference>
<dbReference type="RefSeq" id="XP_001355199.2">
    <property type="nucleotide sequence ID" value="XM_001355163.3"/>
</dbReference>
<dbReference type="SMR" id="Q29G54"/>
<dbReference type="FunCoup" id="Q29G54">
    <property type="interactions" value="3"/>
</dbReference>
<dbReference type="STRING" id="46245.Q29G54"/>
<dbReference type="EnsemblMetazoa" id="FBtr0283546">
    <property type="protein sequence ID" value="FBpp0281984"/>
    <property type="gene ID" value="FBgn0081572"/>
</dbReference>
<dbReference type="KEGG" id="dpo:4815271"/>
<dbReference type="eggNOG" id="KOG4157">
    <property type="taxonomic scope" value="Eukaryota"/>
</dbReference>
<dbReference type="HOGENOM" id="CLU_052719_0_0_1"/>
<dbReference type="InParanoid" id="Q29G54"/>
<dbReference type="OMA" id="EFLQFPV"/>
<dbReference type="Proteomes" id="UP000001819">
    <property type="component" value="Chromosome X"/>
</dbReference>
<dbReference type="Bgee" id="FBgn0081572">
    <property type="expression patterns" value="Expressed in insect adult head"/>
</dbReference>
<dbReference type="ExpressionAtlas" id="Q29G54">
    <property type="expression patterns" value="baseline"/>
</dbReference>
<dbReference type="GO" id="GO:0016020">
    <property type="term" value="C:membrane"/>
    <property type="evidence" value="ECO:0007669"/>
    <property type="project" value="UniProtKB-SubCell"/>
</dbReference>
<dbReference type="Gene3D" id="3.40.50.300">
    <property type="entry name" value="P-loop containing nucleotide triphosphate hydrolases"/>
    <property type="match status" value="1"/>
</dbReference>
<dbReference type="InterPro" id="IPR027417">
    <property type="entry name" value="P-loop_NTPase"/>
</dbReference>
<dbReference type="InterPro" id="IPR051589">
    <property type="entry name" value="Sialate-O-sulfotransferase"/>
</dbReference>
<dbReference type="PANTHER" id="PTHR45964">
    <property type="entry name" value="WSCD FAMILY MEMBER CG9164"/>
    <property type="match status" value="1"/>
</dbReference>
<dbReference type="PANTHER" id="PTHR45964:SF5">
    <property type="entry name" value="WSCD FAMILY MEMBER CG9164"/>
    <property type="match status" value="1"/>
</dbReference>
<dbReference type="Pfam" id="PF13469">
    <property type="entry name" value="Sulfotransfer_3"/>
    <property type="match status" value="1"/>
</dbReference>
<dbReference type="SUPFAM" id="SSF52540">
    <property type="entry name" value="P-loop containing nucleoside triphosphate hydrolases"/>
    <property type="match status" value="1"/>
</dbReference>
<gene>
    <name type="ORF">GA21586</name>
</gene>
<comment type="subcellular location">
    <subcellularLocation>
        <location evidence="2">Membrane</location>
        <topology evidence="2">Single-pass membrane protein</topology>
    </subcellularLocation>
</comment>
<comment type="similarity">
    <text evidence="2">Belongs to the WSCD family.</text>
</comment>
<proteinExistence type="inferred from homology"/>